<reference key="1">
    <citation type="submission" date="2009-03" db="EMBL/GenBank/DDBJ databases">
        <title>Complete genome sequence of Edwardsiella ictaluri 93-146.</title>
        <authorList>
            <person name="Williams M.L."/>
            <person name="Gillaspy A.F."/>
            <person name="Dyer D.W."/>
            <person name="Thune R.L."/>
            <person name="Waldbieser G.C."/>
            <person name="Schuster S.C."/>
            <person name="Gipson J."/>
            <person name="Zaitshik J."/>
            <person name="Landry C."/>
            <person name="Lawrence M.L."/>
        </authorList>
    </citation>
    <scope>NUCLEOTIDE SEQUENCE [LARGE SCALE GENOMIC DNA]</scope>
    <source>
        <strain>93-146</strain>
    </source>
</reference>
<protein>
    <recommendedName>
        <fullName evidence="1">Small ribosomal subunit protein uS15</fullName>
    </recommendedName>
    <alternativeName>
        <fullName evidence="2">30S ribosomal protein S15</fullName>
    </alternativeName>
</protein>
<dbReference type="EMBL" id="CP001600">
    <property type="protein sequence ID" value="ACR67706.1"/>
    <property type="molecule type" value="Genomic_DNA"/>
</dbReference>
<dbReference type="RefSeq" id="WP_005281373.1">
    <property type="nucleotide sequence ID" value="NZ_CP169062.1"/>
</dbReference>
<dbReference type="SMR" id="C5BFC0"/>
<dbReference type="STRING" id="67780.B6E78_13110"/>
<dbReference type="GeneID" id="93122860"/>
<dbReference type="KEGG" id="eic:NT01EI_0470"/>
<dbReference type="HOGENOM" id="CLU_148518_0_0_6"/>
<dbReference type="OrthoDB" id="9799262at2"/>
<dbReference type="Proteomes" id="UP000001485">
    <property type="component" value="Chromosome"/>
</dbReference>
<dbReference type="GO" id="GO:0022627">
    <property type="term" value="C:cytosolic small ribosomal subunit"/>
    <property type="evidence" value="ECO:0007669"/>
    <property type="project" value="TreeGrafter"/>
</dbReference>
<dbReference type="GO" id="GO:0019843">
    <property type="term" value="F:rRNA binding"/>
    <property type="evidence" value="ECO:0007669"/>
    <property type="project" value="UniProtKB-UniRule"/>
</dbReference>
<dbReference type="GO" id="GO:0003735">
    <property type="term" value="F:structural constituent of ribosome"/>
    <property type="evidence" value="ECO:0007669"/>
    <property type="project" value="InterPro"/>
</dbReference>
<dbReference type="GO" id="GO:0006412">
    <property type="term" value="P:translation"/>
    <property type="evidence" value="ECO:0007669"/>
    <property type="project" value="UniProtKB-UniRule"/>
</dbReference>
<dbReference type="CDD" id="cd00353">
    <property type="entry name" value="Ribosomal_S15p_S13e"/>
    <property type="match status" value="1"/>
</dbReference>
<dbReference type="FunFam" id="1.10.287.10:FF:000002">
    <property type="entry name" value="30S ribosomal protein S15"/>
    <property type="match status" value="1"/>
</dbReference>
<dbReference type="Gene3D" id="6.10.250.3130">
    <property type="match status" value="1"/>
</dbReference>
<dbReference type="Gene3D" id="1.10.287.10">
    <property type="entry name" value="S15/NS1, RNA-binding"/>
    <property type="match status" value="1"/>
</dbReference>
<dbReference type="HAMAP" id="MF_01343_B">
    <property type="entry name" value="Ribosomal_uS15_B"/>
    <property type="match status" value="1"/>
</dbReference>
<dbReference type="InterPro" id="IPR000589">
    <property type="entry name" value="Ribosomal_uS15"/>
</dbReference>
<dbReference type="InterPro" id="IPR005290">
    <property type="entry name" value="Ribosomal_uS15_bac-type"/>
</dbReference>
<dbReference type="InterPro" id="IPR009068">
    <property type="entry name" value="uS15_NS1_RNA-bd_sf"/>
</dbReference>
<dbReference type="NCBIfam" id="TIGR00952">
    <property type="entry name" value="S15_bact"/>
    <property type="match status" value="1"/>
</dbReference>
<dbReference type="PANTHER" id="PTHR23321">
    <property type="entry name" value="RIBOSOMAL PROTEIN S15, BACTERIAL AND ORGANELLAR"/>
    <property type="match status" value="1"/>
</dbReference>
<dbReference type="PANTHER" id="PTHR23321:SF26">
    <property type="entry name" value="SMALL RIBOSOMAL SUBUNIT PROTEIN US15M"/>
    <property type="match status" value="1"/>
</dbReference>
<dbReference type="Pfam" id="PF00312">
    <property type="entry name" value="Ribosomal_S15"/>
    <property type="match status" value="1"/>
</dbReference>
<dbReference type="SMART" id="SM01387">
    <property type="entry name" value="Ribosomal_S15"/>
    <property type="match status" value="1"/>
</dbReference>
<dbReference type="SUPFAM" id="SSF47060">
    <property type="entry name" value="S15/NS1 RNA-binding domain"/>
    <property type="match status" value="1"/>
</dbReference>
<dbReference type="PROSITE" id="PS00362">
    <property type="entry name" value="RIBOSOMAL_S15"/>
    <property type="match status" value="1"/>
</dbReference>
<comment type="function">
    <text evidence="1">One of the primary rRNA binding proteins, it binds directly to 16S rRNA where it helps nucleate assembly of the platform of the 30S subunit by binding and bridging several RNA helices of the 16S rRNA.</text>
</comment>
<comment type="function">
    <text evidence="1">Forms an intersubunit bridge (bridge B4) with the 23S rRNA of the 50S subunit in the ribosome.</text>
</comment>
<comment type="subunit">
    <text evidence="1">Part of the 30S ribosomal subunit. Forms a bridge to the 50S subunit in the 70S ribosome, contacting the 23S rRNA.</text>
</comment>
<comment type="similarity">
    <text evidence="1">Belongs to the universal ribosomal protein uS15 family.</text>
</comment>
<keyword id="KW-0687">Ribonucleoprotein</keyword>
<keyword id="KW-0689">Ribosomal protein</keyword>
<keyword id="KW-0694">RNA-binding</keyword>
<keyword id="KW-0699">rRNA-binding</keyword>
<sequence>MSLSVEAKAKIVAEFGRDANDSGSTEVQVALLTAQINHLQGHFAEHKKDHHSRRGLLRMVSQRRKLLDYLKRKDVARYSSLIERLGLRR</sequence>
<organism>
    <name type="scientific">Edwardsiella ictaluri (strain 93-146)</name>
    <dbReference type="NCBI Taxonomy" id="634503"/>
    <lineage>
        <taxon>Bacteria</taxon>
        <taxon>Pseudomonadati</taxon>
        <taxon>Pseudomonadota</taxon>
        <taxon>Gammaproteobacteria</taxon>
        <taxon>Enterobacterales</taxon>
        <taxon>Hafniaceae</taxon>
        <taxon>Edwardsiella</taxon>
    </lineage>
</organism>
<accession>C5BFC0</accession>
<proteinExistence type="inferred from homology"/>
<gene>
    <name evidence="1" type="primary">rpsO</name>
    <name type="ordered locus">NT01EI_0470</name>
</gene>
<feature type="chain" id="PRO_1000214756" description="Small ribosomal subunit protein uS15">
    <location>
        <begin position="1"/>
        <end position="89"/>
    </location>
</feature>
<name>RS15_EDWI9</name>
<evidence type="ECO:0000255" key="1">
    <source>
        <dbReference type="HAMAP-Rule" id="MF_01343"/>
    </source>
</evidence>
<evidence type="ECO:0000305" key="2"/>